<feature type="chain" id="PRO_0000268272" description="Bifunctional protein FolD">
    <location>
        <begin position="1"/>
        <end position="286"/>
    </location>
</feature>
<feature type="binding site" evidence="1">
    <location>
        <begin position="165"/>
        <end position="167"/>
    </location>
    <ligand>
        <name>NADP(+)</name>
        <dbReference type="ChEBI" id="CHEBI:58349"/>
    </ligand>
</feature>
<feature type="binding site" evidence="1">
    <location>
        <position position="190"/>
    </location>
    <ligand>
        <name>NADP(+)</name>
        <dbReference type="ChEBI" id="CHEBI:58349"/>
    </ligand>
</feature>
<feature type="binding site" evidence="1">
    <location>
        <position position="231"/>
    </location>
    <ligand>
        <name>NADP(+)</name>
        <dbReference type="ChEBI" id="CHEBI:58349"/>
    </ligand>
</feature>
<protein>
    <recommendedName>
        <fullName evidence="1">Bifunctional protein FolD</fullName>
    </recommendedName>
    <domain>
        <recommendedName>
            <fullName evidence="1">Methylenetetrahydrofolate dehydrogenase</fullName>
            <ecNumber evidence="1">1.5.1.5</ecNumber>
        </recommendedName>
    </domain>
    <domain>
        <recommendedName>
            <fullName evidence="1">Methenyltetrahydrofolate cyclohydrolase</fullName>
            <ecNumber evidence="1">3.5.4.9</ecNumber>
        </recommendedName>
    </domain>
</protein>
<organism>
    <name type="scientific">Bacillus thuringiensis subsp. konkukian (strain 97-27)</name>
    <dbReference type="NCBI Taxonomy" id="281309"/>
    <lineage>
        <taxon>Bacteria</taxon>
        <taxon>Bacillati</taxon>
        <taxon>Bacillota</taxon>
        <taxon>Bacilli</taxon>
        <taxon>Bacillales</taxon>
        <taxon>Bacillaceae</taxon>
        <taxon>Bacillus</taxon>
        <taxon>Bacillus cereus group</taxon>
    </lineage>
</organism>
<reference key="1">
    <citation type="journal article" date="2006" name="J. Bacteriol.">
        <title>Pathogenomic sequence analysis of Bacillus cereus and Bacillus thuringiensis isolates closely related to Bacillus anthracis.</title>
        <authorList>
            <person name="Han C.S."/>
            <person name="Xie G."/>
            <person name="Challacombe J.F."/>
            <person name="Altherr M.R."/>
            <person name="Bhotika S.S."/>
            <person name="Bruce D."/>
            <person name="Campbell C.S."/>
            <person name="Campbell M.L."/>
            <person name="Chen J."/>
            <person name="Chertkov O."/>
            <person name="Cleland C."/>
            <person name="Dimitrijevic M."/>
            <person name="Doggett N.A."/>
            <person name="Fawcett J.J."/>
            <person name="Glavina T."/>
            <person name="Goodwin L.A."/>
            <person name="Hill K.K."/>
            <person name="Hitchcock P."/>
            <person name="Jackson P.J."/>
            <person name="Keim P."/>
            <person name="Kewalramani A.R."/>
            <person name="Longmire J."/>
            <person name="Lucas S."/>
            <person name="Malfatti S."/>
            <person name="McMurry K."/>
            <person name="Meincke L.J."/>
            <person name="Misra M."/>
            <person name="Moseman B.L."/>
            <person name="Mundt M."/>
            <person name="Munk A.C."/>
            <person name="Okinaka R.T."/>
            <person name="Parson-Quintana B."/>
            <person name="Reilly L.P."/>
            <person name="Richardson P."/>
            <person name="Robinson D.L."/>
            <person name="Rubin E."/>
            <person name="Saunders E."/>
            <person name="Tapia R."/>
            <person name="Tesmer J.G."/>
            <person name="Thayer N."/>
            <person name="Thompson L.S."/>
            <person name="Tice H."/>
            <person name="Ticknor L.O."/>
            <person name="Wills P.L."/>
            <person name="Brettin T.S."/>
            <person name="Gilna P."/>
        </authorList>
    </citation>
    <scope>NUCLEOTIDE SEQUENCE [LARGE SCALE GENOMIC DNA]</scope>
    <source>
        <strain>97-27</strain>
    </source>
</reference>
<gene>
    <name evidence="1" type="primary">folD</name>
    <name type="ordered locus">BT9727_3923</name>
</gene>
<sequence>MVAVIIKGNEVAEKKRAQLKEEVVKLKEQGIVPGLAVILVGEDPASRSYVKGKEKGCEQVGIYSELIEFPETITEERLLAEIDRLNGDDRINGILVQLPLPKHIEEKAIIERISPEKDVDGFHPISVGRMMTGQDTFLPCTPHGIVELVKETNLDISGKHVVVIGRSNIVGKPVGQLFLNENATVTYCHSKTQNMKELTKLADILIVAVGRPKMVTADYIKEGAVVIDVGVNRLETGKLCGDVDFDNVLDVAGYITPVPKGVGPMTITMLLHNTVESAKRAGVVCK</sequence>
<dbReference type="EC" id="1.5.1.5" evidence="1"/>
<dbReference type="EC" id="3.5.4.9" evidence="1"/>
<dbReference type="EMBL" id="AE017355">
    <property type="protein sequence ID" value="AAT63128.1"/>
    <property type="molecule type" value="Genomic_DNA"/>
</dbReference>
<dbReference type="RefSeq" id="WP_000226720.1">
    <property type="nucleotide sequence ID" value="NC_005957.1"/>
</dbReference>
<dbReference type="RefSeq" id="YP_038242.1">
    <property type="nucleotide sequence ID" value="NC_005957.1"/>
</dbReference>
<dbReference type="SMR" id="Q6HDY4"/>
<dbReference type="KEGG" id="btk:BT9727_3923"/>
<dbReference type="PATRIC" id="fig|281309.8.peg.4186"/>
<dbReference type="HOGENOM" id="CLU_034045_2_1_9"/>
<dbReference type="UniPathway" id="UPA00193"/>
<dbReference type="Proteomes" id="UP000001301">
    <property type="component" value="Chromosome"/>
</dbReference>
<dbReference type="GO" id="GO:0005829">
    <property type="term" value="C:cytosol"/>
    <property type="evidence" value="ECO:0007669"/>
    <property type="project" value="TreeGrafter"/>
</dbReference>
<dbReference type="GO" id="GO:0004477">
    <property type="term" value="F:methenyltetrahydrofolate cyclohydrolase activity"/>
    <property type="evidence" value="ECO:0007669"/>
    <property type="project" value="UniProtKB-UniRule"/>
</dbReference>
<dbReference type="GO" id="GO:0004488">
    <property type="term" value="F:methylenetetrahydrofolate dehydrogenase (NADP+) activity"/>
    <property type="evidence" value="ECO:0007669"/>
    <property type="project" value="UniProtKB-UniRule"/>
</dbReference>
<dbReference type="GO" id="GO:0000105">
    <property type="term" value="P:L-histidine biosynthetic process"/>
    <property type="evidence" value="ECO:0007669"/>
    <property type="project" value="UniProtKB-KW"/>
</dbReference>
<dbReference type="GO" id="GO:0009086">
    <property type="term" value="P:methionine biosynthetic process"/>
    <property type="evidence" value="ECO:0007669"/>
    <property type="project" value="UniProtKB-KW"/>
</dbReference>
<dbReference type="GO" id="GO:0006164">
    <property type="term" value="P:purine nucleotide biosynthetic process"/>
    <property type="evidence" value="ECO:0007669"/>
    <property type="project" value="UniProtKB-KW"/>
</dbReference>
<dbReference type="GO" id="GO:0035999">
    <property type="term" value="P:tetrahydrofolate interconversion"/>
    <property type="evidence" value="ECO:0007669"/>
    <property type="project" value="UniProtKB-UniRule"/>
</dbReference>
<dbReference type="CDD" id="cd01080">
    <property type="entry name" value="NAD_bind_m-THF_DH_Cyclohyd"/>
    <property type="match status" value="1"/>
</dbReference>
<dbReference type="FunFam" id="3.40.50.10860:FF:000001">
    <property type="entry name" value="Bifunctional protein FolD"/>
    <property type="match status" value="1"/>
</dbReference>
<dbReference type="FunFam" id="3.40.50.720:FF:000006">
    <property type="entry name" value="Bifunctional protein FolD"/>
    <property type="match status" value="1"/>
</dbReference>
<dbReference type="Gene3D" id="3.40.50.10860">
    <property type="entry name" value="Leucine Dehydrogenase, chain A, domain 1"/>
    <property type="match status" value="1"/>
</dbReference>
<dbReference type="Gene3D" id="3.40.50.720">
    <property type="entry name" value="NAD(P)-binding Rossmann-like Domain"/>
    <property type="match status" value="1"/>
</dbReference>
<dbReference type="HAMAP" id="MF_01576">
    <property type="entry name" value="THF_DHG_CYH"/>
    <property type="match status" value="1"/>
</dbReference>
<dbReference type="InterPro" id="IPR046346">
    <property type="entry name" value="Aminoacid_DH-like_N_sf"/>
</dbReference>
<dbReference type="InterPro" id="IPR036291">
    <property type="entry name" value="NAD(P)-bd_dom_sf"/>
</dbReference>
<dbReference type="InterPro" id="IPR000672">
    <property type="entry name" value="THF_DH/CycHdrlase"/>
</dbReference>
<dbReference type="InterPro" id="IPR020630">
    <property type="entry name" value="THF_DH/CycHdrlase_cat_dom"/>
</dbReference>
<dbReference type="InterPro" id="IPR020867">
    <property type="entry name" value="THF_DH/CycHdrlase_CS"/>
</dbReference>
<dbReference type="InterPro" id="IPR020631">
    <property type="entry name" value="THF_DH/CycHdrlase_NAD-bd_dom"/>
</dbReference>
<dbReference type="NCBIfam" id="NF008058">
    <property type="entry name" value="PRK10792.1"/>
    <property type="match status" value="1"/>
</dbReference>
<dbReference type="NCBIfam" id="NF010783">
    <property type="entry name" value="PRK14186.1"/>
    <property type="match status" value="1"/>
</dbReference>
<dbReference type="PANTHER" id="PTHR48099:SF5">
    <property type="entry name" value="C-1-TETRAHYDROFOLATE SYNTHASE, CYTOPLASMIC"/>
    <property type="match status" value="1"/>
</dbReference>
<dbReference type="PANTHER" id="PTHR48099">
    <property type="entry name" value="C-1-TETRAHYDROFOLATE SYNTHASE, CYTOPLASMIC-RELATED"/>
    <property type="match status" value="1"/>
</dbReference>
<dbReference type="Pfam" id="PF00763">
    <property type="entry name" value="THF_DHG_CYH"/>
    <property type="match status" value="1"/>
</dbReference>
<dbReference type="Pfam" id="PF02882">
    <property type="entry name" value="THF_DHG_CYH_C"/>
    <property type="match status" value="1"/>
</dbReference>
<dbReference type="PRINTS" id="PR00085">
    <property type="entry name" value="THFDHDRGNASE"/>
</dbReference>
<dbReference type="SUPFAM" id="SSF53223">
    <property type="entry name" value="Aminoacid dehydrogenase-like, N-terminal domain"/>
    <property type="match status" value="1"/>
</dbReference>
<dbReference type="SUPFAM" id="SSF51735">
    <property type="entry name" value="NAD(P)-binding Rossmann-fold domains"/>
    <property type="match status" value="1"/>
</dbReference>
<dbReference type="PROSITE" id="PS00767">
    <property type="entry name" value="THF_DHG_CYH_2"/>
    <property type="match status" value="1"/>
</dbReference>
<comment type="function">
    <text evidence="1">Catalyzes the oxidation of 5,10-methylenetetrahydrofolate to 5,10-methenyltetrahydrofolate and then the hydrolysis of 5,10-methenyltetrahydrofolate to 10-formyltetrahydrofolate.</text>
</comment>
<comment type="catalytic activity">
    <reaction evidence="1">
        <text>(6R)-5,10-methylene-5,6,7,8-tetrahydrofolate + NADP(+) = (6R)-5,10-methenyltetrahydrofolate + NADPH</text>
        <dbReference type="Rhea" id="RHEA:22812"/>
        <dbReference type="ChEBI" id="CHEBI:15636"/>
        <dbReference type="ChEBI" id="CHEBI:57455"/>
        <dbReference type="ChEBI" id="CHEBI:57783"/>
        <dbReference type="ChEBI" id="CHEBI:58349"/>
        <dbReference type="EC" id="1.5.1.5"/>
    </reaction>
</comment>
<comment type="catalytic activity">
    <reaction evidence="1">
        <text>(6R)-5,10-methenyltetrahydrofolate + H2O = (6R)-10-formyltetrahydrofolate + H(+)</text>
        <dbReference type="Rhea" id="RHEA:23700"/>
        <dbReference type="ChEBI" id="CHEBI:15377"/>
        <dbReference type="ChEBI" id="CHEBI:15378"/>
        <dbReference type="ChEBI" id="CHEBI:57455"/>
        <dbReference type="ChEBI" id="CHEBI:195366"/>
        <dbReference type="EC" id="3.5.4.9"/>
    </reaction>
</comment>
<comment type="pathway">
    <text evidence="1">One-carbon metabolism; tetrahydrofolate interconversion.</text>
</comment>
<comment type="subunit">
    <text evidence="1">Homodimer.</text>
</comment>
<comment type="similarity">
    <text evidence="1">Belongs to the tetrahydrofolate dehydrogenase/cyclohydrolase family.</text>
</comment>
<proteinExistence type="inferred from homology"/>
<name>FOLD_BACHK</name>
<keyword id="KW-0028">Amino-acid biosynthesis</keyword>
<keyword id="KW-0368">Histidine biosynthesis</keyword>
<keyword id="KW-0378">Hydrolase</keyword>
<keyword id="KW-0486">Methionine biosynthesis</keyword>
<keyword id="KW-0511">Multifunctional enzyme</keyword>
<keyword id="KW-0521">NADP</keyword>
<keyword id="KW-0554">One-carbon metabolism</keyword>
<keyword id="KW-0560">Oxidoreductase</keyword>
<keyword id="KW-0658">Purine biosynthesis</keyword>
<evidence type="ECO:0000255" key="1">
    <source>
        <dbReference type="HAMAP-Rule" id="MF_01576"/>
    </source>
</evidence>
<accession>Q6HDY4</accession>